<keyword id="KW-0004">4Fe-4S</keyword>
<keyword id="KW-0408">Iron</keyword>
<keyword id="KW-0411">Iron-sulfur</keyword>
<keyword id="KW-0479">Metal-binding</keyword>
<keyword id="KW-0949">S-adenosyl-L-methionine</keyword>
<protein>
    <recommendedName>
        <fullName evidence="1">UPF0313 protein VV1_2212</fullName>
    </recommendedName>
</protein>
<name>Y2212_VIBVU</name>
<sequence>MHSDITPIHTHKKYWAECFGTAPFLPTSRKEMDALGWDSCDIVLVTGDAYVDHPSFGMAIIGRLLEAQGFRVGIIAQPQWQDKTDFMSLGKPNLFFGVTSGNMDSMINRYTSDRKLRHDDAYTPNNEGGKRPDRATLVYSQRCREAYKDVPIVLGGIEASLRRVAHYDYWSDKVRRSVLLDAKADILLFGNAERALVEVAHRLAEGEEIAQMTNIRGTAVNLAAEPEGYTIIDSSRIEKPRKEAFIPPNPYEVETQCETKSEEPKAQPITIRPSRHDAATTAVRLPSFEKLQNDRILYAHASRILHLETNPYSGRALIQRHGNRELWVNQAPIPLTTEEMDYVFGLPYARVPHPKYGKAKIPAYDMIKTSVNIMRGCFGGCSFCSITEHEGRIIQNRSQESILTELEEIRDKVPGFTGTISDLGGPTANMYRLGCSDPKAEANCRRPSCVFPGICNKLNTDHKHTIDLYRAARQVKGVKKVMIASGVRYDLAIESPEYVKELVTHHVGGYLKIAPEHTEKGPLDLMMKPGMGTYDRFKEMFDKYSQEAGKKQYLIPYFISAHPGTTDEDMLNLALWLKKNNYECDQVQNFYPSPMCNATSMYYSETNPLKRVKYKQREDVPVAKGDRQRRLHKALLRYHDPANWPLIREALITMGKKYLIGDKPGCLVPAEDMDARTPAQRRKSGRHGANRFATKHTSTQPGFPGDKANAGSGKKPTRGGQSNSAPSRSGSATGGKHPQRSGANTGGKSSGGKNSPRAGGRNQPSRAR</sequence>
<evidence type="ECO:0000255" key="1">
    <source>
        <dbReference type="HAMAP-Rule" id="MF_01251"/>
    </source>
</evidence>
<evidence type="ECO:0000255" key="2">
    <source>
        <dbReference type="PROSITE-ProRule" id="PRU01266"/>
    </source>
</evidence>
<evidence type="ECO:0000256" key="3">
    <source>
        <dbReference type="SAM" id="MobiDB-lite"/>
    </source>
</evidence>
<organism>
    <name type="scientific">Vibrio vulnificus (strain CMCP6)</name>
    <dbReference type="NCBI Taxonomy" id="216895"/>
    <lineage>
        <taxon>Bacteria</taxon>
        <taxon>Pseudomonadati</taxon>
        <taxon>Pseudomonadota</taxon>
        <taxon>Gammaproteobacteria</taxon>
        <taxon>Vibrionales</taxon>
        <taxon>Vibrionaceae</taxon>
        <taxon>Vibrio</taxon>
    </lineage>
</organism>
<feature type="chain" id="PRO_0000076400" description="UPF0313 protein VV1_2212">
    <location>
        <begin position="1"/>
        <end position="768"/>
    </location>
</feature>
<feature type="domain" description="Radical SAM core" evidence="2">
    <location>
        <begin position="363"/>
        <end position="640"/>
    </location>
</feature>
<feature type="region of interest" description="Disordered" evidence="3">
    <location>
        <begin position="674"/>
        <end position="768"/>
    </location>
</feature>
<feature type="compositionally biased region" description="Basic residues" evidence="3">
    <location>
        <begin position="679"/>
        <end position="689"/>
    </location>
</feature>
<feature type="compositionally biased region" description="Polar residues" evidence="3">
    <location>
        <begin position="719"/>
        <end position="731"/>
    </location>
</feature>
<feature type="binding site" evidence="1">
    <location>
        <position position="377"/>
    </location>
    <ligand>
        <name>[4Fe-4S] cluster</name>
        <dbReference type="ChEBI" id="CHEBI:49883"/>
        <note>4Fe-4S-S-AdoMet</note>
    </ligand>
</feature>
<feature type="binding site" evidence="1">
    <location>
        <position position="381"/>
    </location>
    <ligand>
        <name>[4Fe-4S] cluster</name>
        <dbReference type="ChEBI" id="CHEBI:49883"/>
        <note>4Fe-4S-S-AdoMet</note>
    </ligand>
</feature>
<feature type="binding site" evidence="1">
    <location>
        <position position="384"/>
    </location>
    <ligand>
        <name>[4Fe-4S] cluster</name>
        <dbReference type="ChEBI" id="CHEBI:49883"/>
        <note>4Fe-4S-S-AdoMet</note>
    </ligand>
</feature>
<dbReference type="EMBL" id="AE016795">
    <property type="protein sequence ID" value="AAO10594.1"/>
    <property type="molecule type" value="Genomic_DNA"/>
</dbReference>
<dbReference type="RefSeq" id="WP_011080086.1">
    <property type="nucleotide sequence ID" value="NC_004459.3"/>
</dbReference>
<dbReference type="KEGG" id="vvu:VV1_2212"/>
<dbReference type="HOGENOM" id="CLU_018288_2_0_6"/>
<dbReference type="Proteomes" id="UP000002275">
    <property type="component" value="Chromosome 1"/>
</dbReference>
<dbReference type="GO" id="GO:0051539">
    <property type="term" value="F:4 iron, 4 sulfur cluster binding"/>
    <property type="evidence" value="ECO:0007669"/>
    <property type="project" value="UniProtKB-KW"/>
</dbReference>
<dbReference type="GO" id="GO:0003824">
    <property type="term" value="F:catalytic activity"/>
    <property type="evidence" value="ECO:0007669"/>
    <property type="project" value="InterPro"/>
</dbReference>
<dbReference type="GO" id="GO:0005506">
    <property type="term" value="F:iron ion binding"/>
    <property type="evidence" value="ECO:0007669"/>
    <property type="project" value="UniProtKB-UniRule"/>
</dbReference>
<dbReference type="Gene3D" id="3.80.30.20">
    <property type="entry name" value="tm_1862 like domain"/>
    <property type="match status" value="1"/>
</dbReference>
<dbReference type="HAMAP" id="MF_01251">
    <property type="entry name" value="UPF0313"/>
    <property type="match status" value="1"/>
</dbReference>
<dbReference type="InterPro" id="IPR006638">
    <property type="entry name" value="Elp3/MiaA/NifB-like_rSAM"/>
</dbReference>
<dbReference type="InterPro" id="IPR020612">
    <property type="entry name" value="Methylthiotransferase_CS"/>
</dbReference>
<dbReference type="InterPro" id="IPR007197">
    <property type="entry name" value="rSAM"/>
</dbReference>
<dbReference type="InterPro" id="IPR023404">
    <property type="entry name" value="rSAM_horseshoe"/>
</dbReference>
<dbReference type="InterPro" id="IPR022946">
    <property type="entry name" value="UPF0313"/>
</dbReference>
<dbReference type="InterPro" id="IPR024560">
    <property type="entry name" value="UPF0313_C"/>
</dbReference>
<dbReference type="InterPro" id="IPR013704">
    <property type="entry name" value="UPF0313_N"/>
</dbReference>
<dbReference type="NCBIfam" id="TIGR03904">
    <property type="entry name" value="SAM_YgiQ"/>
    <property type="match status" value="1"/>
</dbReference>
<dbReference type="PANTHER" id="PTHR32331">
    <property type="entry name" value="UPF0313 PROTEIN YGIQ"/>
    <property type="match status" value="1"/>
</dbReference>
<dbReference type="PANTHER" id="PTHR32331:SF0">
    <property type="entry name" value="UPF0313 PROTEIN YGIQ"/>
    <property type="match status" value="1"/>
</dbReference>
<dbReference type="Pfam" id="PF11842">
    <property type="entry name" value="DUF3362"/>
    <property type="match status" value="1"/>
</dbReference>
<dbReference type="Pfam" id="PF04055">
    <property type="entry name" value="Radical_SAM"/>
    <property type="match status" value="1"/>
</dbReference>
<dbReference type="Pfam" id="PF08497">
    <property type="entry name" value="Radical_SAM_N"/>
    <property type="match status" value="1"/>
</dbReference>
<dbReference type="SFLD" id="SFLDG01082">
    <property type="entry name" value="B12-binding_domain_containing"/>
    <property type="match status" value="1"/>
</dbReference>
<dbReference type="SFLD" id="SFLDS00029">
    <property type="entry name" value="Radical_SAM"/>
    <property type="match status" value="1"/>
</dbReference>
<dbReference type="SFLD" id="SFLDG01069">
    <property type="entry name" value="UPF0313"/>
    <property type="match status" value="1"/>
</dbReference>
<dbReference type="SMART" id="SM00729">
    <property type="entry name" value="Elp3"/>
    <property type="match status" value="1"/>
</dbReference>
<dbReference type="SUPFAM" id="SSF102114">
    <property type="entry name" value="Radical SAM enzymes"/>
    <property type="match status" value="1"/>
</dbReference>
<dbReference type="PROSITE" id="PS51918">
    <property type="entry name" value="RADICAL_SAM"/>
    <property type="match status" value="1"/>
</dbReference>
<comment type="cofactor">
    <cofactor evidence="1">
        <name>[4Fe-4S] cluster</name>
        <dbReference type="ChEBI" id="CHEBI:49883"/>
    </cofactor>
    <text evidence="1">Binds 1 [4Fe-4S] cluster. The cluster is coordinated with 3 cysteines and an exchangeable S-adenosyl-L-methionine.</text>
</comment>
<comment type="similarity">
    <text evidence="1">Belongs to the UPF0313 family.</text>
</comment>
<gene>
    <name type="ordered locus">VV1_2212</name>
</gene>
<accession>Q8DAI5</accession>
<reference key="1">
    <citation type="submission" date="2002-12" db="EMBL/GenBank/DDBJ databases">
        <title>Complete genome sequence of Vibrio vulnificus CMCP6.</title>
        <authorList>
            <person name="Rhee J.H."/>
            <person name="Kim S.Y."/>
            <person name="Chung S.S."/>
            <person name="Kim J.J."/>
            <person name="Moon Y.H."/>
            <person name="Jeong H."/>
            <person name="Choy H.E."/>
        </authorList>
    </citation>
    <scope>NUCLEOTIDE SEQUENCE [LARGE SCALE GENOMIC DNA]</scope>
    <source>
        <strain>CMCP6</strain>
    </source>
</reference>
<proteinExistence type="inferred from homology"/>